<feature type="chain" id="PRO_0000059335" description="PHD finger protein At1g33420">
    <location>
        <begin position="1"/>
        <end position="697"/>
    </location>
</feature>
<feature type="zinc finger region" description="PHD-type">
    <location>
        <begin position="603"/>
        <end position="653"/>
    </location>
</feature>
<feature type="strand" evidence="2">
    <location>
        <begin position="601"/>
        <end position="604"/>
    </location>
</feature>
<feature type="strand" evidence="2">
    <location>
        <begin position="618"/>
        <end position="620"/>
    </location>
</feature>
<feature type="strand" evidence="2">
    <location>
        <begin position="622"/>
        <end position="624"/>
    </location>
</feature>
<feature type="strand" evidence="2">
    <location>
        <begin position="626"/>
        <end position="629"/>
    </location>
</feature>
<feature type="turn" evidence="2">
    <location>
        <begin position="630"/>
        <end position="634"/>
    </location>
</feature>
<feature type="helix" evidence="2">
    <location>
        <begin position="648"/>
        <end position="653"/>
    </location>
</feature>
<comment type="subcellular location">
    <subcellularLocation>
        <location evidence="1">Nucleus</location>
    </subcellularLocation>
</comment>
<gene>
    <name type="ordered locus">At1g33420</name>
    <name type="ORF">F10C21.9</name>
</gene>
<sequence length="697" mass="78094">MAVMNGGRATKRARRSNRISADLYDFSTFPTAEINGESTTLPPFRDGVRTFLATHARVTFPPSTLFSSLMTWQIMLRPGDSTDGSDLSSKLVSLDVVEEDVTRSSRSVYCEHCCVVGWSSHPVCRKRYRFIIRSGGDTKACTRCGNTQNLSEGSNCKWCSMALDIENWVYSQLEDNTHLLHGVIHSNGYAHLLCLNGREGGSGFLTGRAIMDFWDRLCSSLAVRKASVMDVSRKYGMDYRLLHGITRGCSWYSEWGYEFKSGSYALTKEAYQSAVDTLSAIPLSEFLFQGRKPRTQLHSIISFYQSLSCSELVTVKDLFSFLLQMIRENSSKPASKSSVLCAWSKSDVERVQQTMVKILKASGRPQANWVTRWALKRSICKSASPQLIDYCLKHFGGVLVDDGSRVVSSRCNPGSNDFEYRLESVNNVHRLSNQDVNNASVEHVKQDLRYLYETLLHPQTMAEFRSRATREKMIDAATKILDCKHFIKDYLSSTVNPVAINLWCCVELSDELKESPAPPPERLVLPLNATVSDLKIEAAKAFQEVYAMFKRFEVEELLGYGSIDDSITLKFLVGTNGVIRIKGRCSKHGLLRYRMERGVDNWKVDCKCGTKDDDGERMLACDGCGVWHHTRCIGINNADALPSKFLCFRCIELYSKKPKQSKKERGSSQVPKAGFVCRGESAAMGSGSNLSVTLRVG</sequence>
<reference key="1">
    <citation type="journal article" date="2000" name="Nature">
        <title>Sequence and analysis of chromosome 1 of the plant Arabidopsis thaliana.</title>
        <authorList>
            <person name="Theologis A."/>
            <person name="Ecker J.R."/>
            <person name="Palm C.J."/>
            <person name="Federspiel N.A."/>
            <person name="Kaul S."/>
            <person name="White O."/>
            <person name="Alonso J."/>
            <person name="Altafi H."/>
            <person name="Araujo R."/>
            <person name="Bowman C.L."/>
            <person name="Brooks S.Y."/>
            <person name="Buehler E."/>
            <person name="Chan A."/>
            <person name="Chao Q."/>
            <person name="Chen H."/>
            <person name="Cheuk R.F."/>
            <person name="Chin C.W."/>
            <person name="Chung M.K."/>
            <person name="Conn L."/>
            <person name="Conway A.B."/>
            <person name="Conway A.R."/>
            <person name="Creasy T.H."/>
            <person name="Dewar K."/>
            <person name="Dunn P."/>
            <person name="Etgu P."/>
            <person name="Feldblyum T.V."/>
            <person name="Feng J.-D."/>
            <person name="Fong B."/>
            <person name="Fujii C.Y."/>
            <person name="Gill J.E."/>
            <person name="Goldsmith A.D."/>
            <person name="Haas B."/>
            <person name="Hansen N.F."/>
            <person name="Hughes B."/>
            <person name="Huizar L."/>
            <person name="Hunter J.L."/>
            <person name="Jenkins J."/>
            <person name="Johnson-Hopson C."/>
            <person name="Khan S."/>
            <person name="Khaykin E."/>
            <person name="Kim C.J."/>
            <person name="Koo H.L."/>
            <person name="Kremenetskaia I."/>
            <person name="Kurtz D.B."/>
            <person name="Kwan A."/>
            <person name="Lam B."/>
            <person name="Langin-Hooper S."/>
            <person name="Lee A."/>
            <person name="Lee J.M."/>
            <person name="Lenz C.A."/>
            <person name="Li J.H."/>
            <person name="Li Y.-P."/>
            <person name="Lin X."/>
            <person name="Liu S.X."/>
            <person name="Liu Z.A."/>
            <person name="Luros J.S."/>
            <person name="Maiti R."/>
            <person name="Marziali A."/>
            <person name="Militscher J."/>
            <person name="Miranda M."/>
            <person name="Nguyen M."/>
            <person name="Nierman W.C."/>
            <person name="Osborne B.I."/>
            <person name="Pai G."/>
            <person name="Peterson J."/>
            <person name="Pham P.K."/>
            <person name="Rizzo M."/>
            <person name="Rooney T."/>
            <person name="Rowley D."/>
            <person name="Sakano H."/>
            <person name="Salzberg S.L."/>
            <person name="Schwartz J.R."/>
            <person name="Shinn P."/>
            <person name="Southwick A.M."/>
            <person name="Sun H."/>
            <person name="Tallon L.J."/>
            <person name="Tambunga G."/>
            <person name="Toriumi M.J."/>
            <person name="Town C.D."/>
            <person name="Utterback T."/>
            <person name="Van Aken S."/>
            <person name="Vaysberg M."/>
            <person name="Vysotskaia V.S."/>
            <person name="Walker M."/>
            <person name="Wu D."/>
            <person name="Yu G."/>
            <person name="Fraser C.M."/>
            <person name="Venter J.C."/>
            <person name="Davis R.W."/>
        </authorList>
    </citation>
    <scope>NUCLEOTIDE SEQUENCE [LARGE SCALE GENOMIC DNA]</scope>
    <source>
        <strain>cv. Columbia</strain>
    </source>
</reference>
<reference key="2">
    <citation type="journal article" date="2017" name="Plant J.">
        <title>Araport11: a complete reannotation of the Arabidopsis thaliana reference genome.</title>
        <authorList>
            <person name="Cheng C.Y."/>
            <person name="Krishnakumar V."/>
            <person name="Chan A.P."/>
            <person name="Thibaud-Nissen F."/>
            <person name="Schobel S."/>
            <person name="Town C.D."/>
        </authorList>
    </citation>
    <scope>GENOME REANNOTATION</scope>
    <source>
        <strain>cv. Columbia</strain>
    </source>
</reference>
<reference key="3">
    <citation type="journal article" date="2003" name="Science">
        <title>Empirical analysis of transcriptional activity in the Arabidopsis genome.</title>
        <authorList>
            <person name="Yamada K."/>
            <person name="Lim J."/>
            <person name="Dale J.M."/>
            <person name="Chen H."/>
            <person name="Shinn P."/>
            <person name="Palm C.J."/>
            <person name="Southwick A.M."/>
            <person name="Wu H.C."/>
            <person name="Kim C.J."/>
            <person name="Nguyen M."/>
            <person name="Pham P.K."/>
            <person name="Cheuk R.F."/>
            <person name="Karlin-Newmann G."/>
            <person name="Liu S.X."/>
            <person name="Lam B."/>
            <person name="Sakano H."/>
            <person name="Wu T."/>
            <person name="Yu G."/>
            <person name="Miranda M."/>
            <person name="Quach H.L."/>
            <person name="Tripp M."/>
            <person name="Chang C.H."/>
            <person name="Lee J.M."/>
            <person name="Toriumi M.J."/>
            <person name="Chan M.M."/>
            <person name="Tang C.C."/>
            <person name="Onodera C.S."/>
            <person name="Deng J.M."/>
            <person name="Akiyama K."/>
            <person name="Ansari Y."/>
            <person name="Arakawa T."/>
            <person name="Banh J."/>
            <person name="Banno F."/>
            <person name="Bowser L."/>
            <person name="Brooks S.Y."/>
            <person name="Carninci P."/>
            <person name="Chao Q."/>
            <person name="Choy N."/>
            <person name="Enju A."/>
            <person name="Goldsmith A.D."/>
            <person name="Gurjal M."/>
            <person name="Hansen N.F."/>
            <person name="Hayashizaki Y."/>
            <person name="Johnson-Hopson C."/>
            <person name="Hsuan V.W."/>
            <person name="Iida K."/>
            <person name="Karnes M."/>
            <person name="Khan S."/>
            <person name="Koesema E."/>
            <person name="Ishida J."/>
            <person name="Jiang P.X."/>
            <person name="Jones T."/>
            <person name="Kawai J."/>
            <person name="Kamiya A."/>
            <person name="Meyers C."/>
            <person name="Nakajima M."/>
            <person name="Narusaka M."/>
            <person name="Seki M."/>
            <person name="Sakurai T."/>
            <person name="Satou M."/>
            <person name="Tamse R."/>
            <person name="Vaysberg M."/>
            <person name="Wallender E.K."/>
            <person name="Wong C."/>
            <person name="Yamamura Y."/>
            <person name="Yuan S."/>
            <person name="Shinozaki K."/>
            <person name="Davis R.W."/>
            <person name="Theologis A."/>
            <person name="Ecker J.R."/>
        </authorList>
    </citation>
    <scope>NUCLEOTIDE SEQUENCE [LARGE SCALE MRNA]</scope>
    <source>
        <strain>cv. Columbia</strain>
    </source>
</reference>
<reference key="4">
    <citation type="submission" date="2004-11" db="PDB data bank">
        <title>Solution structure of PHD domain in PHD finger family protein.</title>
        <authorList>
            <consortium name="RIKEN structural genomics initiative (RSGI)"/>
        </authorList>
    </citation>
    <scope>STRUCTURE BY NMR OF 595-653</scope>
</reference>
<accession>Q9C810</accession>
<protein>
    <recommendedName>
        <fullName>PHD finger protein At1g33420</fullName>
    </recommendedName>
</protein>
<proteinExistence type="evidence at protein level"/>
<name>Y1342_ARATH</name>
<organism>
    <name type="scientific">Arabidopsis thaliana</name>
    <name type="common">Mouse-ear cress</name>
    <dbReference type="NCBI Taxonomy" id="3702"/>
    <lineage>
        <taxon>Eukaryota</taxon>
        <taxon>Viridiplantae</taxon>
        <taxon>Streptophyta</taxon>
        <taxon>Embryophyta</taxon>
        <taxon>Tracheophyta</taxon>
        <taxon>Spermatophyta</taxon>
        <taxon>Magnoliopsida</taxon>
        <taxon>eudicotyledons</taxon>
        <taxon>Gunneridae</taxon>
        <taxon>Pentapetalae</taxon>
        <taxon>rosids</taxon>
        <taxon>malvids</taxon>
        <taxon>Brassicales</taxon>
        <taxon>Brassicaceae</taxon>
        <taxon>Camelineae</taxon>
        <taxon>Arabidopsis</taxon>
    </lineage>
</organism>
<keyword id="KW-0002">3D-structure</keyword>
<keyword id="KW-0479">Metal-binding</keyword>
<keyword id="KW-0539">Nucleus</keyword>
<keyword id="KW-1185">Reference proteome</keyword>
<keyword id="KW-0804">Transcription</keyword>
<keyword id="KW-0805">Transcription regulation</keyword>
<keyword id="KW-0862">Zinc</keyword>
<keyword id="KW-0863">Zinc-finger</keyword>
<dbReference type="EMBL" id="AC051630">
    <property type="protein sequence ID" value="AAG51204.1"/>
    <property type="molecule type" value="Genomic_DNA"/>
</dbReference>
<dbReference type="EMBL" id="CP002684">
    <property type="protein sequence ID" value="AEE31592.1"/>
    <property type="molecule type" value="Genomic_DNA"/>
</dbReference>
<dbReference type="EMBL" id="AY035054">
    <property type="protein sequence ID" value="AAK59559.1"/>
    <property type="molecule type" value="mRNA"/>
</dbReference>
<dbReference type="EMBL" id="AY051061">
    <property type="protein sequence ID" value="AAK93738.1"/>
    <property type="molecule type" value="mRNA"/>
</dbReference>
<dbReference type="PIR" id="H86457">
    <property type="entry name" value="H86457"/>
</dbReference>
<dbReference type="RefSeq" id="NP_564424.1">
    <property type="nucleotide sequence ID" value="NM_103067.1"/>
</dbReference>
<dbReference type="PDB" id="1WEE">
    <property type="method" value="NMR"/>
    <property type="chains" value="A=595-653"/>
</dbReference>
<dbReference type="PDBsum" id="1WEE"/>
<dbReference type="SMR" id="Q9C810"/>
<dbReference type="FunCoup" id="Q9C810">
    <property type="interactions" value="312"/>
</dbReference>
<dbReference type="STRING" id="3702.Q9C810"/>
<dbReference type="iPTMnet" id="Q9C810"/>
<dbReference type="PaxDb" id="3702-AT1G33420.1"/>
<dbReference type="EnsemblPlants" id="AT1G33420.1">
    <property type="protein sequence ID" value="AT1G33420.1"/>
    <property type="gene ID" value="AT1G33420"/>
</dbReference>
<dbReference type="GeneID" id="840235"/>
<dbReference type="Gramene" id="AT1G33420.1">
    <property type="protein sequence ID" value="AT1G33420.1"/>
    <property type="gene ID" value="AT1G33420"/>
</dbReference>
<dbReference type="KEGG" id="ath:AT1G33420"/>
<dbReference type="Araport" id="AT1G33420"/>
<dbReference type="TAIR" id="AT1G33420"/>
<dbReference type="eggNOG" id="KOG1844">
    <property type="taxonomic scope" value="Eukaryota"/>
</dbReference>
<dbReference type="HOGENOM" id="CLU_012141_0_0_1"/>
<dbReference type="InParanoid" id="Q9C810"/>
<dbReference type="PhylomeDB" id="Q9C810"/>
<dbReference type="EvolutionaryTrace" id="Q9C810"/>
<dbReference type="PRO" id="PR:Q9C810"/>
<dbReference type="Proteomes" id="UP000006548">
    <property type="component" value="Chromosome 1"/>
</dbReference>
<dbReference type="ExpressionAtlas" id="Q9C810">
    <property type="expression patterns" value="differential"/>
</dbReference>
<dbReference type="GO" id="GO:0005634">
    <property type="term" value="C:nucleus"/>
    <property type="evidence" value="ECO:0007669"/>
    <property type="project" value="UniProtKB-SubCell"/>
</dbReference>
<dbReference type="GO" id="GO:0008270">
    <property type="term" value="F:zinc ion binding"/>
    <property type="evidence" value="ECO:0007669"/>
    <property type="project" value="UniProtKB-KW"/>
</dbReference>
<dbReference type="CDD" id="cd15556">
    <property type="entry name" value="PHD_MMD1_like"/>
    <property type="match status" value="1"/>
</dbReference>
<dbReference type="Gene3D" id="3.30.40.10">
    <property type="entry name" value="Zinc/RING finger domain, C3HC4 (zinc finger)"/>
    <property type="match status" value="1"/>
</dbReference>
<dbReference type="InterPro" id="IPR019786">
    <property type="entry name" value="Zinc_finger_PHD-type_CS"/>
</dbReference>
<dbReference type="InterPro" id="IPR011011">
    <property type="entry name" value="Znf_FYVE_PHD"/>
</dbReference>
<dbReference type="InterPro" id="IPR001965">
    <property type="entry name" value="Znf_PHD"/>
</dbReference>
<dbReference type="InterPro" id="IPR019787">
    <property type="entry name" value="Znf_PHD-finger"/>
</dbReference>
<dbReference type="InterPro" id="IPR013083">
    <property type="entry name" value="Znf_RING/FYVE/PHD"/>
</dbReference>
<dbReference type="PANTHER" id="PTHR46201:SF6">
    <property type="entry name" value="PHD FINGER PLANT-LIKE PROTEIN"/>
    <property type="match status" value="1"/>
</dbReference>
<dbReference type="PANTHER" id="PTHR46201">
    <property type="entry name" value="PHD FINGER PROTEIN MALE MEIOCYTE DEATH 1-RELATED"/>
    <property type="match status" value="1"/>
</dbReference>
<dbReference type="Pfam" id="PF00628">
    <property type="entry name" value="PHD"/>
    <property type="match status" value="1"/>
</dbReference>
<dbReference type="SMART" id="SM00249">
    <property type="entry name" value="PHD"/>
    <property type="match status" value="1"/>
</dbReference>
<dbReference type="SUPFAM" id="SSF57903">
    <property type="entry name" value="FYVE/PHD zinc finger"/>
    <property type="match status" value="1"/>
</dbReference>
<dbReference type="PROSITE" id="PS01359">
    <property type="entry name" value="ZF_PHD_1"/>
    <property type="match status" value="1"/>
</dbReference>
<evidence type="ECO:0000250" key="1"/>
<evidence type="ECO:0007829" key="2">
    <source>
        <dbReference type="PDB" id="1WEE"/>
    </source>
</evidence>